<gene>
    <name evidence="1" type="primary">uppP</name>
    <name type="ordered locus">Bpro_3344</name>
</gene>
<name>UPPP_POLSJ</name>
<comment type="function">
    <text evidence="1">Catalyzes the dephosphorylation of undecaprenyl diphosphate (UPP). Confers resistance to bacitracin.</text>
</comment>
<comment type="catalytic activity">
    <reaction evidence="1">
        <text>di-trans,octa-cis-undecaprenyl diphosphate + H2O = di-trans,octa-cis-undecaprenyl phosphate + phosphate + H(+)</text>
        <dbReference type="Rhea" id="RHEA:28094"/>
        <dbReference type="ChEBI" id="CHEBI:15377"/>
        <dbReference type="ChEBI" id="CHEBI:15378"/>
        <dbReference type="ChEBI" id="CHEBI:43474"/>
        <dbReference type="ChEBI" id="CHEBI:58405"/>
        <dbReference type="ChEBI" id="CHEBI:60392"/>
        <dbReference type="EC" id="3.6.1.27"/>
    </reaction>
</comment>
<comment type="subcellular location">
    <subcellularLocation>
        <location evidence="1">Cell inner membrane</location>
        <topology evidence="1">Multi-pass membrane protein</topology>
    </subcellularLocation>
</comment>
<comment type="miscellaneous">
    <text>Bacitracin is thought to be involved in the inhibition of peptidoglycan synthesis by sequestering undecaprenyl diphosphate, thereby reducing the pool of lipid carrier available.</text>
</comment>
<comment type="similarity">
    <text evidence="1">Belongs to the UppP family.</text>
</comment>
<proteinExistence type="inferred from homology"/>
<accession>Q127N8</accession>
<feature type="chain" id="PRO_0000290744" description="Undecaprenyl-diphosphatase">
    <location>
        <begin position="1"/>
        <end position="277"/>
    </location>
</feature>
<feature type="transmembrane region" description="Helical" evidence="1">
    <location>
        <begin position="3"/>
        <end position="23"/>
    </location>
</feature>
<feature type="transmembrane region" description="Helical" evidence="1">
    <location>
        <begin position="44"/>
        <end position="64"/>
    </location>
</feature>
<feature type="transmembrane region" description="Helical" evidence="1">
    <location>
        <begin position="82"/>
        <end position="102"/>
    </location>
</feature>
<feature type="transmembrane region" description="Helical" evidence="1">
    <location>
        <begin position="109"/>
        <end position="129"/>
    </location>
</feature>
<feature type="transmembrane region" description="Helical" evidence="1">
    <location>
        <begin position="188"/>
        <end position="208"/>
    </location>
</feature>
<feature type="transmembrane region" description="Helical" evidence="1">
    <location>
        <begin position="218"/>
        <end position="238"/>
    </location>
</feature>
<feature type="transmembrane region" description="Helical" evidence="1">
    <location>
        <begin position="249"/>
        <end position="269"/>
    </location>
</feature>
<evidence type="ECO:0000255" key="1">
    <source>
        <dbReference type="HAMAP-Rule" id="MF_01006"/>
    </source>
</evidence>
<protein>
    <recommendedName>
        <fullName evidence="1">Undecaprenyl-diphosphatase</fullName>
        <ecNumber evidence="1">3.6.1.27</ecNumber>
    </recommendedName>
    <alternativeName>
        <fullName evidence="1">Bacitracin resistance protein</fullName>
    </alternativeName>
    <alternativeName>
        <fullName evidence="1">Undecaprenyl pyrophosphate phosphatase</fullName>
    </alternativeName>
</protein>
<keyword id="KW-0046">Antibiotic resistance</keyword>
<keyword id="KW-0997">Cell inner membrane</keyword>
<keyword id="KW-1003">Cell membrane</keyword>
<keyword id="KW-0133">Cell shape</keyword>
<keyword id="KW-0961">Cell wall biogenesis/degradation</keyword>
<keyword id="KW-0378">Hydrolase</keyword>
<keyword id="KW-0472">Membrane</keyword>
<keyword id="KW-0573">Peptidoglycan synthesis</keyword>
<keyword id="KW-1185">Reference proteome</keyword>
<keyword id="KW-0812">Transmembrane</keyword>
<keyword id="KW-1133">Transmembrane helix</keyword>
<sequence length="277" mass="30018">MDIALLIKAAIMGVVEGLTEFLPISSTGHLILAGALLGFDDDKAKVFDIAIQTGAIFAVILVYWQKIRDTLVALPTEKQAQQFALNVLVAFVPAVVLGLLFGKAIQAHLFTPVVVASTFVIGGFIILWAEKRQERNPAVARIHEVEAMTVMDALKVGLVQCLAMIPGTSRSGATIIGGMLLGLSRKAATDFSFYLAIPTLIGAGVYSLYKERALLSVADVPLFMVGLVFSFVSAWLCIRWLLRYISSHSFIPFAWYRIAFGVVVLATAWSGVVTWTP</sequence>
<reference key="1">
    <citation type="journal article" date="2008" name="Appl. Environ. Microbiol.">
        <title>The genome of Polaromonas sp. strain JS666: insights into the evolution of a hydrocarbon- and xenobiotic-degrading bacterium, and features of relevance to biotechnology.</title>
        <authorList>
            <person name="Mattes T.E."/>
            <person name="Alexander A.K."/>
            <person name="Richardson P.M."/>
            <person name="Munk A.C."/>
            <person name="Han C.S."/>
            <person name="Stothard P."/>
            <person name="Coleman N.V."/>
        </authorList>
    </citation>
    <scope>NUCLEOTIDE SEQUENCE [LARGE SCALE GENOMIC DNA]</scope>
    <source>
        <strain>JS666 / ATCC BAA-500</strain>
    </source>
</reference>
<dbReference type="EC" id="3.6.1.27" evidence="1"/>
<dbReference type="EMBL" id="CP000316">
    <property type="protein sequence ID" value="ABE45254.1"/>
    <property type="molecule type" value="Genomic_DNA"/>
</dbReference>
<dbReference type="RefSeq" id="WP_011484248.1">
    <property type="nucleotide sequence ID" value="NC_007948.1"/>
</dbReference>
<dbReference type="SMR" id="Q127N8"/>
<dbReference type="STRING" id="296591.Bpro_3344"/>
<dbReference type="KEGG" id="pol:Bpro_3344"/>
<dbReference type="eggNOG" id="COG1968">
    <property type="taxonomic scope" value="Bacteria"/>
</dbReference>
<dbReference type="HOGENOM" id="CLU_060296_2_0_4"/>
<dbReference type="OrthoDB" id="9808289at2"/>
<dbReference type="Proteomes" id="UP000001983">
    <property type="component" value="Chromosome"/>
</dbReference>
<dbReference type="GO" id="GO:0005886">
    <property type="term" value="C:plasma membrane"/>
    <property type="evidence" value="ECO:0007669"/>
    <property type="project" value="UniProtKB-SubCell"/>
</dbReference>
<dbReference type="GO" id="GO:0050380">
    <property type="term" value="F:undecaprenyl-diphosphatase activity"/>
    <property type="evidence" value="ECO:0007669"/>
    <property type="project" value="UniProtKB-UniRule"/>
</dbReference>
<dbReference type="GO" id="GO:0071555">
    <property type="term" value="P:cell wall organization"/>
    <property type="evidence" value="ECO:0007669"/>
    <property type="project" value="UniProtKB-KW"/>
</dbReference>
<dbReference type="GO" id="GO:0009252">
    <property type="term" value="P:peptidoglycan biosynthetic process"/>
    <property type="evidence" value="ECO:0007669"/>
    <property type="project" value="UniProtKB-KW"/>
</dbReference>
<dbReference type="GO" id="GO:0008360">
    <property type="term" value="P:regulation of cell shape"/>
    <property type="evidence" value="ECO:0007669"/>
    <property type="project" value="UniProtKB-KW"/>
</dbReference>
<dbReference type="GO" id="GO:0046677">
    <property type="term" value="P:response to antibiotic"/>
    <property type="evidence" value="ECO:0007669"/>
    <property type="project" value="UniProtKB-UniRule"/>
</dbReference>
<dbReference type="HAMAP" id="MF_01006">
    <property type="entry name" value="Undec_diphosphatase"/>
    <property type="match status" value="1"/>
</dbReference>
<dbReference type="InterPro" id="IPR003824">
    <property type="entry name" value="UppP"/>
</dbReference>
<dbReference type="NCBIfam" id="NF001389">
    <property type="entry name" value="PRK00281.1-2"/>
    <property type="match status" value="1"/>
</dbReference>
<dbReference type="NCBIfam" id="NF001390">
    <property type="entry name" value="PRK00281.1-4"/>
    <property type="match status" value="1"/>
</dbReference>
<dbReference type="NCBIfam" id="TIGR00753">
    <property type="entry name" value="undec_PP_bacA"/>
    <property type="match status" value="1"/>
</dbReference>
<dbReference type="PANTHER" id="PTHR30622">
    <property type="entry name" value="UNDECAPRENYL-DIPHOSPHATASE"/>
    <property type="match status" value="1"/>
</dbReference>
<dbReference type="PANTHER" id="PTHR30622:SF3">
    <property type="entry name" value="UNDECAPRENYL-DIPHOSPHATASE"/>
    <property type="match status" value="1"/>
</dbReference>
<dbReference type="Pfam" id="PF02673">
    <property type="entry name" value="BacA"/>
    <property type="match status" value="1"/>
</dbReference>
<organism>
    <name type="scientific">Polaromonas sp. (strain JS666 / ATCC BAA-500)</name>
    <dbReference type="NCBI Taxonomy" id="296591"/>
    <lineage>
        <taxon>Bacteria</taxon>
        <taxon>Pseudomonadati</taxon>
        <taxon>Pseudomonadota</taxon>
        <taxon>Betaproteobacteria</taxon>
        <taxon>Burkholderiales</taxon>
        <taxon>Comamonadaceae</taxon>
        <taxon>Polaromonas</taxon>
    </lineage>
</organism>